<reference key="1">
    <citation type="journal article" date="2006" name="Mol. Microbiol.">
        <title>Role of pathogenicity island-associated integrases in the genome plasticity of uropathogenic Escherichia coli strain 536.</title>
        <authorList>
            <person name="Hochhut B."/>
            <person name="Wilde C."/>
            <person name="Balling G."/>
            <person name="Middendorf B."/>
            <person name="Dobrindt U."/>
            <person name="Brzuszkiewicz E."/>
            <person name="Gottschalk G."/>
            <person name="Carniel E."/>
            <person name="Hacker J."/>
        </authorList>
    </citation>
    <scope>NUCLEOTIDE SEQUENCE [LARGE SCALE GENOMIC DNA]</scope>
    <source>
        <strain>536 / UPEC</strain>
    </source>
</reference>
<sequence>MYYPFVRKALFQLDPERAHEFTFQQLRRITGTPFEALVRQKVPAKPVNCMGLTFKNPLGLAAGLDKDGECIDALGAMGFGSIEIGTVTPRPQPGNDKPRLFRLVDAEGLINRMGFNNLGVDNLVENVKKAHYDGVLGINIGKNKDTPVEQGKDDYLICMEKIYAYAGYIAINISSPNTPGLRTLQYGEALDDLLTAIKNKQNDLQVMHHKYVPIAVKIAPDLSEEELIQVADSLVRHNIDGVIATNTTLDRSLVQGMKNCDQTGGLSGRPLQLKSTEIIRRLSQELNGRLPIIGVGGIDSVIAAREKIAAGASLVQIYSGFIFKGPPLIKEIVTHI</sequence>
<accession>Q0TJB6</accession>
<organism>
    <name type="scientific">Escherichia coli O6:K15:H31 (strain 536 / UPEC)</name>
    <dbReference type="NCBI Taxonomy" id="362663"/>
    <lineage>
        <taxon>Bacteria</taxon>
        <taxon>Pseudomonadati</taxon>
        <taxon>Pseudomonadota</taxon>
        <taxon>Gammaproteobacteria</taxon>
        <taxon>Enterobacterales</taxon>
        <taxon>Enterobacteriaceae</taxon>
        <taxon>Escherichia</taxon>
    </lineage>
</organism>
<proteinExistence type="inferred from homology"/>
<protein>
    <recommendedName>
        <fullName evidence="1">Dihydroorotate dehydrogenase (quinone)</fullName>
        <ecNumber evidence="1">1.3.5.2</ecNumber>
    </recommendedName>
    <alternativeName>
        <fullName evidence="1">DHOdehase</fullName>
        <shortName evidence="1">DHOD</shortName>
        <shortName evidence="1">DHODase</shortName>
    </alternativeName>
    <alternativeName>
        <fullName evidence="1">Dihydroorotate oxidase</fullName>
    </alternativeName>
</protein>
<gene>
    <name evidence="1" type="primary">pyrD</name>
    <name type="ordered locus">ECP_0950</name>
</gene>
<comment type="function">
    <text evidence="1">Catalyzes the conversion of dihydroorotate to orotate with quinone as electron acceptor.</text>
</comment>
<comment type="catalytic activity">
    <reaction evidence="1">
        <text>(S)-dihydroorotate + a quinone = orotate + a quinol</text>
        <dbReference type="Rhea" id="RHEA:30187"/>
        <dbReference type="ChEBI" id="CHEBI:24646"/>
        <dbReference type="ChEBI" id="CHEBI:30839"/>
        <dbReference type="ChEBI" id="CHEBI:30864"/>
        <dbReference type="ChEBI" id="CHEBI:132124"/>
        <dbReference type="EC" id="1.3.5.2"/>
    </reaction>
</comment>
<comment type="cofactor">
    <cofactor evidence="1">
        <name>FMN</name>
        <dbReference type="ChEBI" id="CHEBI:58210"/>
    </cofactor>
    <text evidence="1">Binds 1 FMN per subunit.</text>
</comment>
<comment type="pathway">
    <text evidence="1">Pyrimidine metabolism; UMP biosynthesis via de novo pathway; orotate from (S)-dihydroorotate (quinone route): step 1/1.</text>
</comment>
<comment type="subunit">
    <text evidence="1">Monomer.</text>
</comment>
<comment type="subcellular location">
    <subcellularLocation>
        <location evidence="1">Cell membrane</location>
        <topology evidence="1">Peripheral membrane protein</topology>
    </subcellularLocation>
</comment>
<comment type="similarity">
    <text evidence="1">Belongs to the dihydroorotate dehydrogenase family. Type 2 subfamily.</text>
</comment>
<name>PYRD_ECOL5</name>
<keyword id="KW-1003">Cell membrane</keyword>
<keyword id="KW-0285">Flavoprotein</keyword>
<keyword id="KW-0288">FMN</keyword>
<keyword id="KW-0472">Membrane</keyword>
<keyword id="KW-0560">Oxidoreductase</keyword>
<keyword id="KW-0665">Pyrimidine biosynthesis</keyword>
<dbReference type="EC" id="1.3.5.2" evidence="1"/>
<dbReference type="EMBL" id="CP000247">
    <property type="protein sequence ID" value="ABG68963.1"/>
    <property type="molecule type" value="Genomic_DNA"/>
</dbReference>
<dbReference type="RefSeq" id="WP_001295934.1">
    <property type="nucleotide sequence ID" value="NC_008253.1"/>
</dbReference>
<dbReference type="SMR" id="Q0TJB6"/>
<dbReference type="KEGG" id="ecp:ECP_0950"/>
<dbReference type="HOGENOM" id="CLU_013640_2_0_6"/>
<dbReference type="UniPathway" id="UPA00070">
    <property type="reaction ID" value="UER00946"/>
</dbReference>
<dbReference type="Proteomes" id="UP000009182">
    <property type="component" value="Chromosome"/>
</dbReference>
<dbReference type="GO" id="GO:0005737">
    <property type="term" value="C:cytoplasm"/>
    <property type="evidence" value="ECO:0007669"/>
    <property type="project" value="InterPro"/>
</dbReference>
<dbReference type="GO" id="GO:0005886">
    <property type="term" value="C:plasma membrane"/>
    <property type="evidence" value="ECO:0007669"/>
    <property type="project" value="UniProtKB-SubCell"/>
</dbReference>
<dbReference type="GO" id="GO:0106430">
    <property type="term" value="F:dihydroorotate dehydrogenase (quinone) activity"/>
    <property type="evidence" value="ECO:0007669"/>
    <property type="project" value="UniProtKB-EC"/>
</dbReference>
<dbReference type="GO" id="GO:0006207">
    <property type="term" value="P:'de novo' pyrimidine nucleobase biosynthetic process"/>
    <property type="evidence" value="ECO:0007669"/>
    <property type="project" value="InterPro"/>
</dbReference>
<dbReference type="GO" id="GO:0044205">
    <property type="term" value="P:'de novo' UMP biosynthetic process"/>
    <property type="evidence" value="ECO:0007669"/>
    <property type="project" value="UniProtKB-UniRule"/>
</dbReference>
<dbReference type="CDD" id="cd04738">
    <property type="entry name" value="DHOD_2_like"/>
    <property type="match status" value="1"/>
</dbReference>
<dbReference type="FunFam" id="3.20.20.70:FF:000028">
    <property type="entry name" value="Dihydroorotate dehydrogenase (quinone)"/>
    <property type="match status" value="1"/>
</dbReference>
<dbReference type="Gene3D" id="3.20.20.70">
    <property type="entry name" value="Aldolase class I"/>
    <property type="match status" value="1"/>
</dbReference>
<dbReference type="HAMAP" id="MF_00225">
    <property type="entry name" value="DHO_dh_type2"/>
    <property type="match status" value="1"/>
</dbReference>
<dbReference type="InterPro" id="IPR013785">
    <property type="entry name" value="Aldolase_TIM"/>
</dbReference>
<dbReference type="InterPro" id="IPR050074">
    <property type="entry name" value="DHO_dehydrogenase"/>
</dbReference>
<dbReference type="InterPro" id="IPR012135">
    <property type="entry name" value="Dihydroorotate_DH_1_2"/>
</dbReference>
<dbReference type="InterPro" id="IPR005719">
    <property type="entry name" value="Dihydroorotate_DH_2"/>
</dbReference>
<dbReference type="InterPro" id="IPR005720">
    <property type="entry name" value="Dihydroorotate_DH_cat"/>
</dbReference>
<dbReference type="InterPro" id="IPR001295">
    <property type="entry name" value="Dihydroorotate_DH_CS"/>
</dbReference>
<dbReference type="NCBIfam" id="NF003644">
    <property type="entry name" value="PRK05286.1-1"/>
    <property type="match status" value="1"/>
</dbReference>
<dbReference type="NCBIfam" id="NF003645">
    <property type="entry name" value="PRK05286.1-2"/>
    <property type="match status" value="1"/>
</dbReference>
<dbReference type="NCBIfam" id="NF003646">
    <property type="entry name" value="PRK05286.1-4"/>
    <property type="match status" value="1"/>
</dbReference>
<dbReference type="NCBIfam" id="NF003652">
    <property type="entry name" value="PRK05286.2-5"/>
    <property type="match status" value="1"/>
</dbReference>
<dbReference type="NCBIfam" id="TIGR01036">
    <property type="entry name" value="pyrD_sub2"/>
    <property type="match status" value="1"/>
</dbReference>
<dbReference type="PANTHER" id="PTHR48109:SF4">
    <property type="entry name" value="DIHYDROOROTATE DEHYDROGENASE (QUINONE), MITOCHONDRIAL"/>
    <property type="match status" value="1"/>
</dbReference>
<dbReference type="PANTHER" id="PTHR48109">
    <property type="entry name" value="DIHYDROOROTATE DEHYDROGENASE (QUINONE), MITOCHONDRIAL-RELATED"/>
    <property type="match status" value="1"/>
</dbReference>
<dbReference type="Pfam" id="PF01180">
    <property type="entry name" value="DHO_dh"/>
    <property type="match status" value="1"/>
</dbReference>
<dbReference type="PIRSF" id="PIRSF000164">
    <property type="entry name" value="DHO_oxidase"/>
    <property type="match status" value="1"/>
</dbReference>
<dbReference type="SUPFAM" id="SSF51395">
    <property type="entry name" value="FMN-linked oxidoreductases"/>
    <property type="match status" value="1"/>
</dbReference>
<dbReference type="PROSITE" id="PS00911">
    <property type="entry name" value="DHODEHASE_1"/>
    <property type="match status" value="1"/>
</dbReference>
<dbReference type="PROSITE" id="PS00912">
    <property type="entry name" value="DHODEHASE_2"/>
    <property type="match status" value="1"/>
</dbReference>
<feature type="chain" id="PRO_1000024173" description="Dihydroorotate dehydrogenase (quinone)">
    <location>
        <begin position="1"/>
        <end position="336"/>
    </location>
</feature>
<feature type="active site" description="Nucleophile" evidence="1">
    <location>
        <position position="175"/>
    </location>
</feature>
<feature type="binding site" evidence="1">
    <location>
        <begin position="62"/>
        <end position="66"/>
    </location>
    <ligand>
        <name>FMN</name>
        <dbReference type="ChEBI" id="CHEBI:58210"/>
    </ligand>
</feature>
<feature type="binding site" evidence="1">
    <location>
        <position position="66"/>
    </location>
    <ligand>
        <name>substrate</name>
    </ligand>
</feature>
<feature type="binding site" evidence="1">
    <location>
        <position position="86"/>
    </location>
    <ligand>
        <name>FMN</name>
        <dbReference type="ChEBI" id="CHEBI:58210"/>
    </ligand>
</feature>
<feature type="binding site" evidence="1">
    <location>
        <begin position="111"/>
        <end position="115"/>
    </location>
    <ligand>
        <name>substrate</name>
    </ligand>
</feature>
<feature type="binding site" evidence="1">
    <location>
        <position position="139"/>
    </location>
    <ligand>
        <name>FMN</name>
        <dbReference type="ChEBI" id="CHEBI:58210"/>
    </ligand>
</feature>
<feature type="binding site" evidence="1">
    <location>
        <position position="172"/>
    </location>
    <ligand>
        <name>FMN</name>
        <dbReference type="ChEBI" id="CHEBI:58210"/>
    </ligand>
</feature>
<feature type="binding site" evidence="1">
    <location>
        <position position="172"/>
    </location>
    <ligand>
        <name>substrate</name>
    </ligand>
</feature>
<feature type="binding site" evidence="1">
    <location>
        <position position="177"/>
    </location>
    <ligand>
        <name>substrate</name>
    </ligand>
</feature>
<feature type="binding site" evidence="1">
    <location>
        <position position="217"/>
    </location>
    <ligand>
        <name>FMN</name>
        <dbReference type="ChEBI" id="CHEBI:58210"/>
    </ligand>
</feature>
<feature type="binding site" evidence="1">
    <location>
        <position position="245"/>
    </location>
    <ligand>
        <name>FMN</name>
        <dbReference type="ChEBI" id="CHEBI:58210"/>
    </ligand>
</feature>
<feature type="binding site" evidence="1">
    <location>
        <begin position="246"/>
        <end position="247"/>
    </location>
    <ligand>
        <name>substrate</name>
    </ligand>
</feature>
<feature type="binding site" evidence="1">
    <location>
        <position position="268"/>
    </location>
    <ligand>
        <name>FMN</name>
        <dbReference type="ChEBI" id="CHEBI:58210"/>
    </ligand>
</feature>
<feature type="binding site" evidence="1">
    <location>
        <position position="297"/>
    </location>
    <ligand>
        <name>FMN</name>
        <dbReference type="ChEBI" id="CHEBI:58210"/>
    </ligand>
</feature>
<feature type="binding site" evidence="1">
    <location>
        <begin position="318"/>
        <end position="319"/>
    </location>
    <ligand>
        <name>FMN</name>
        <dbReference type="ChEBI" id="CHEBI:58210"/>
    </ligand>
</feature>
<evidence type="ECO:0000255" key="1">
    <source>
        <dbReference type="HAMAP-Rule" id="MF_00225"/>
    </source>
</evidence>